<name>KAE1_YARLI</name>
<proteinExistence type="inferred from homology"/>
<reference key="1">
    <citation type="journal article" date="2004" name="Nature">
        <title>Genome evolution in yeasts.</title>
        <authorList>
            <person name="Dujon B."/>
            <person name="Sherman D."/>
            <person name="Fischer G."/>
            <person name="Durrens P."/>
            <person name="Casaregola S."/>
            <person name="Lafontaine I."/>
            <person name="de Montigny J."/>
            <person name="Marck C."/>
            <person name="Neuveglise C."/>
            <person name="Talla E."/>
            <person name="Goffard N."/>
            <person name="Frangeul L."/>
            <person name="Aigle M."/>
            <person name="Anthouard V."/>
            <person name="Babour A."/>
            <person name="Barbe V."/>
            <person name="Barnay S."/>
            <person name="Blanchin S."/>
            <person name="Beckerich J.-M."/>
            <person name="Beyne E."/>
            <person name="Bleykasten C."/>
            <person name="Boisrame A."/>
            <person name="Boyer J."/>
            <person name="Cattolico L."/>
            <person name="Confanioleri F."/>
            <person name="de Daruvar A."/>
            <person name="Despons L."/>
            <person name="Fabre E."/>
            <person name="Fairhead C."/>
            <person name="Ferry-Dumazet H."/>
            <person name="Groppi A."/>
            <person name="Hantraye F."/>
            <person name="Hennequin C."/>
            <person name="Jauniaux N."/>
            <person name="Joyet P."/>
            <person name="Kachouri R."/>
            <person name="Kerrest A."/>
            <person name="Koszul R."/>
            <person name="Lemaire M."/>
            <person name="Lesur I."/>
            <person name="Ma L."/>
            <person name="Muller H."/>
            <person name="Nicaud J.-M."/>
            <person name="Nikolski M."/>
            <person name="Oztas S."/>
            <person name="Ozier-Kalogeropoulos O."/>
            <person name="Pellenz S."/>
            <person name="Potier S."/>
            <person name="Richard G.-F."/>
            <person name="Straub M.-L."/>
            <person name="Suleau A."/>
            <person name="Swennen D."/>
            <person name="Tekaia F."/>
            <person name="Wesolowski-Louvel M."/>
            <person name="Westhof E."/>
            <person name="Wirth B."/>
            <person name="Zeniou-Meyer M."/>
            <person name="Zivanovic Y."/>
            <person name="Bolotin-Fukuhara M."/>
            <person name="Thierry A."/>
            <person name="Bouchier C."/>
            <person name="Caudron B."/>
            <person name="Scarpelli C."/>
            <person name="Gaillardin C."/>
            <person name="Weissenbach J."/>
            <person name="Wincker P."/>
            <person name="Souciet J.-L."/>
        </authorList>
    </citation>
    <scope>NUCLEOTIDE SEQUENCE [LARGE SCALE GENOMIC DNA]</scope>
    <source>
        <strain>CLIB 122 / E 150</strain>
    </source>
</reference>
<feature type="chain" id="PRO_0000278941" description="tRNA N6-adenosine threonylcarbamoyltransferase">
    <location>
        <begin position="1"/>
        <end position="356"/>
    </location>
</feature>
<feature type="binding site" evidence="1">
    <location>
        <position position="124"/>
    </location>
    <ligand>
        <name>a divalent metal cation</name>
        <dbReference type="ChEBI" id="CHEBI:60240"/>
    </ligand>
</feature>
<feature type="binding site" evidence="1">
    <location>
        <position position="128"/>
    </location>
    <ligand>
        <name>a divalent metal cation</name>
        <dbReference type="ChEBI" id="CHEBI:60240"/>
    </ligand>
</feature>
<feature type="binding site" evidence="1">
    <location>
        <begin position="145"/>
        <end position="149"/>
    </location>
    <ligand>
        <name>substrate</name>
    </ligand>
</feature>
<feature type="binding site" evidence="1">
    <location>
        <position position="145"/>
    </location>
    <ligand>
        <name>a divalent metal cation</name>
        <dbReference type="ChEBI" id="CHEBI:60240"/>
    </ligand>
</feature>
<feature type="binding site" evidence="1">
    <location>
        <position position="177"/>
    </location>
    <ligand>
        <name>substrate</name>
    </ligand>
</feature>
<feature type="binding site" evidence="1">
    <location>
        <position position="192"/>
    </location>
    <ligand>
        <name>substrate</name>
    </ligand>
</feature>
<feature type="binding site" evidence="1">
    <location>
        <position position="196"/>
    </location>
    <ligand>
        <name>substrate</name>
    </ligand>
</feature>
<feature type="binding site" evidence="1">
    <location>
        <position position="287"/>
    </location>
    <ligand>
        <name>substrate</name>
    </ligand>
</feature>
<feature type="binding site" evidence="1">
    <location>
        <position position="315"/>
    </location>
    <ligand>
        <name>a divalent metal cation</name>
        <dbReference type="ChEBI" id="CHEBI:60240"/>
    </ligand>
</feature>
<protein>
    <recommendedName>
        <fullName evidence="1">tRNA N6-adenosine threonylcarbamoyltransferase</fullName>
        <ecNumber evidence="1">2.3.1.234</ecNumber>
    </recommendedName>
    <alternativeName>
        <fullName>N6-L-threonylcarbamoyladenine synthase</fullName>
        <shortName>t(6)A synthase</shortName>
    </alternativeName>
    <alternativeName>
        <fullName evidence="1">t(6)A37 threonylcarbamoyladenosine biosynthesis protein KAE1</fullName>
    </alternativeName>
    <alternativeName>
        <fullName evidence="1">tRNA threonylcarbamoyladenosine biosynthesis protein KAE1</fullName>
    </alternativeName>
</protein>
<dbReference type="EC" id="2.3.1.234" evidence="1"/>
<dbReference type="EMBL" id="CR382129">
    <property type="protein sequence ID" value="CAG81768.1"/>
    <property type="molecule type" value="Genomic_DNA"/>
</dbReference>
<dbReference type="RefSeq" id="XP_501467.1">
    <property type="nucleotide sequence ID" value="XM_501467.1"/>
</dbReference>
<dbReference type="SMR" id="Q6CCZ5"/>
<dbReference type="FunCoup" id="Q6CCZ5">
    <property type="interactions" value="605"/>
</dbReference>
<dbReference type="STRING" id="284591.Q6CCZ5"/>
<dbReference type="EnsemblFungi" id="CAG81768">
    <property type="protein sequence ID" value="CAG81768"/>
    <property type="gene ID" value="YALI0_C05280g"/>
</dbReference>
<dbReference type="KEGG" id="yli:2909371"/>
<dbReference type="VEuPathDB" id="FungiDB:YALI0_C05280g"/>
<dbReference type="HOGENOM" id="CLU_023208_2_2_1"/>
<dbReference type="InParanoid" id="Q6CCZ5"/>
<dbReference type="OMA" id="HHRSWVV"/>
<dbReference type="OrthoDB" id="116949at4891"/>
<dbReference type="Proteomes" id="UP000001300">
    <property type="component" value="Chromosome C"/>
</dbReference>
<dbReference type="GO" id="GO:0000785">
    <property type="term" value="C:chromatin"/>
    <property type="evidence" value="ECO:0007669"/>
    <property type="project" value="EnsemblFungi"/>
</dbReference>
<dbReference type="GO" id="GO:0005737">
    <property type="term" value="C:cytoplasm"/>
    <property type="evidence" value="ECO:0000318"/>
    <property type="project" value="GO_Central"/>
</dbReference>
<dbReference type="GO" id="GO:0000408">
    <property type="term" value="C:EKC/KEOPS complex"/>
    <property type="evidence" value="ECO:0000318"/>
    <property type="project" value="GO_Central"/>
</dbReference>
<dbReference type="GO" id="GO:0005634">
    <property type="term" value="C:nucleus"/>
    <property type="evidence" value="ECO:0007669"/>
    <property type="project" value="UniProtKB-SubCell"/>
</dbReference>
<dbReference type="GO" id="GO:0031490">
    <property type="term" value="F:chromatin DNA binding"/>
    <property type="evidence" value="ECO:0007669"/>
    <property type="project" value="EnsemblFungi"/>
</dbReference>
<dbReference type="GO" id="GO:0046872">
    <property type="term" value="F:metal ion binding"/>
    <property type="evidence" value="ECO:0007669"/>
    <property type="project" value="UniProtKB-KW"/>
</dbReference>
<dbReference type="GO" id="GO:0061711">
    <property type="term" value="F:N(6)-L-threonylcarbamoyladenine synthase activity"/>
    <property type="evidence" value="ECO:0007669"/>
    <property type="project" value="UniProtKB-EC"/>
</dbReference>
<dbReference type="GO" id="GO:0008252">
    <property type="term" value="F:nucleotidase activity"/>
    <property type="evidence" value="ECO:0007669"/>
    <property type="project" value="EnsemblFungi"/>
</dbReference>
<dbReference type="GO" id="GO:0045944">
    <property type="term" value="P:positive regulation of transcription by RNA polymerase II"/>
    <property type="evidence" value="ECO:0007669"/>
    <property type="project" value="EnsemblFungi"/>
</dbReference>
<dbReference type="GO" id="GO:0000722">
    <property type="term" value="P:telomere maintenance via recombination"/>
    <property type="evidence" value="ECO:0007669"/>
    <property type="project" value="EnsemblFungi"/>
</dbReference>
<dbReference type="GO" id="GO:0002949">
    <property type="term" value="P:tRNA threonylcarbamoyladenosine modification"/>
    <property type="evidence" value="ECO:0007669"/>
    <property type="project" value="UniProtKB-UniRule"/>
</dbReference>
<dbReference type="CDD" id="cd24132">
    <property type="entry name" value="ASKHA_NBD_OSGEP_like_euk"/>
    <property type="match status" value="1"/>
</dbReference>
<dbReference type="FunFam" id="3.30.420.40:FF:000141">
    <property type="entry name" value="Probable tRNA N6-adenosine threonylcarbamoyltransferase"/>
    <property type="match status" value="1"/>
</dbReference>
<dbReference type="FunFam" id="3.30.420.40:FF:000295">
    <property type="entry name" value="Probable tRNA N6-adenosine threonylcarbamoyltransferase"/>
    <property type="match status" value="1"/>
</dbReference>
<dbReference type="Gene3D" id="3.30.420.40">
    <property type="match status" value="2"/>
</dbReference>
<dbReference type="HAMAP" id="MF_01446">
    <property type="entry name" value="Kae1"/>
    <property type="match status" value="1"/>
</dbReference>
<dbReference type="InterPro" id="IPR043129">
    <property type="entry name" value="ATPase_NBD"/>
</dbReference>
<dbReference type="InterPro" id="IPR000905">
    <property type="entry name" value="Gcp-like_dom"/>
</dbReference>
<dbReference type="InterPro" id="IPR017861">
    <property type="entry name" value="KAE1/TsaD"/>
</dbReference>
<dbReference type="InterPro" id="IPR034680">
    <property type="entry name" value="Kae1_archaea_euk"/>
</dbReference>
<dbReference type="InterPro" id="IPR017860">
    <property type="entry name" value="Peptidase_M22_CS"/>
</dbReference>
<dbReference type="NCBIfam" id="TIGR03722">
    <property type="entry name" value="arch_KAE1"/>
    <property type="match status" value="1"/>
</dbReference>
<dbReference type="NCBIfam" id="TIGR00329">
    <property type="entry name" value="gcp_kae1"/>
    <property type="match status" value="1"/>
</dbReference>
<dbReference type="PANTHER" id="PTHR11735">
    <property type="entry name" value="TRNA N6-ADENOSINE THREONYLCARBAMOYLTRANSFERASE"/>
    <property type="match status" value="1"/>
</dbReference>
<dbReference type="PANTHER" id="PTHR11735:SF14">
    <property type="entry name" value="TRNA N6-ADENOSINE THREONYLCARBAMOYLTRANSFERASE"/>
    <property type="match status" value="1"/>
</dbReference>
<dbReference type="Pfam" id="PF00814">
    <property type="entry name" value="TsaD"/>
    <property type="match status" value="1"/>
</dbReference>
<dbReference type="PRINTS" id="PR00789">
    <property type="entry name" value="OSIALOPTASE"/>
</dbReference>
<dbReference type="SUPFAM" id="SSF53067">
    <property type="entry name" value="Actin-like ATPase domain"/>
    <property type="match status" value="1"/>
</dbReference>
<dbReference type="PROSITE" id="PS01016">
    <property type="entry name" value="GLYCOPROTEASE"/>
    <property type="match status" value="1"/>
</dbReference>
<sequence length="356" mass="39201">MTTYLSLGLEGSANKLGVGVIKHTVTDANAENGFSTDILSNIRDTYITPPGEGFLPRDTARHHRNWVVRIIKRALDEAKISDPTKLHCISFTQGPGMGAPLQSVVIAARTIAQMWGVPLVGVNHCVGHIEMGRTITGATNPVVLYVSGGNTQVIAYSKQRYRIFGETLDIAVGNCLDRFARVLKIPNAPSPGYNIEQLAKKGKKYVPLPYTVKGMDLSMSGVLQFVESLAKRFQAGDLVVDGHQVTAEDLCFSLQETLFAMLVEITERAMAHVNSQQVLIVGGVGCNERLQEMMGIMARDRNGSVYATDERFCIDNGIMIAHAGLLAWRQGFETKMEKTQCTQRFRTDEVLVDWRV</sequence>
<organism>
    <name type="scientific">Yarrowia lipolytica (strain CLIB 122 / E 150)</name>
    <name type="common">Yeast</name>
    <name type="synonym">Candida lipolytica</name>
    <dbReference type="NCBI Taxonomy" id="284591"/>
    <lineage>
        <taxon>Eukaryota</taxon>
        <taxon>Fungi</taxon>
        <taxon>Dikarya</taxon>
        <taxon>Ascomycota</taxon>
        <taxon>Saccharomycotina</taxon>
        <taxon>Dipodascomycetes</taxon>
        <taxon>Dipodascales</taxon>
        <taxon>Dipodascales incertae sedis</taxon>
        <taxon>Yarrowia</taxon>
    </lineage>
</organism>
<comment type="function">
    <text evidence="1">Component of the EKC/KEOPS complex that is required for the formation of a threonylcarbamoyl group on adenosine at position 37 (t(6)A37) in tRNAs that read codons beginning with adenine. The complex is probably involved in the transfer of the threonylcarbamoyl moiety of threonylcarbamoyl-AMP (TC-AMP) to the N6 group of A37. KAE1 likely plays a direct catalytic role in this reaction, but requires other protein(s) of the complex to fulfill this activity. The EKC/KEOPS complex also promotes both telomere uncapping and telomere elongation. The complex is required for efficient recruitment of transcriptional coactivators.</text>
</comment>
<comment type="catalytic activity">
    <reaction evidence="1">
        <text>L-threonylcarbamoyladenylate + adenosine(37) in tRNA = N(6)-L-threonylcarbamoyladenosine(37) in tRNA + AMP + H(+)</text>
        <dbReference type="Rhea" id="RHEA:37059"/>
        <dbReference type="Rhea" id="RHEA-COMP:10162"/>
        <dbReference type="Rhea" id="RHEA-COMP:10163"/>
        <dbReference type="ChEBI" id="CHEBI:15378"/>
        <dbReference type="ChEBI" id="CHEBI:73682"/>
        <dbReference type="ChEBI" id="CHEBI:74411"/>
        <dbReference type="ChEBI" id="CHEBI:74418"/>
        <dbReference type="ChEBI" id="CHEBI:456215"/>
        <dbReference type="EC" id="2.3.1.234"/>
    </reaction>
</comment>
<comment type="cofactor">
    <cofactor evidence="1">
        <name>a divalent metal cation</name>
        <dbReference type="ChEBI" id="CHEBI:60240"/>
    </cofactor>
    <text evidence="1">Binds 1 divalent metal cation per subunit.</text>
</comment>
<comment type="subunit">
    <text evidence="1">Component of the EKC/KEOPS complex composed of at least BUD32, CGI121, GON7, KAE1 and PCC1; the whole complex dimerizes.</text>
</comment>
<comment type="subcellular location">
    <subcellularLocation>
        <location evidence="1">Cytoplasm</location>
    </subcellularLocation>
    <subcellularLocation>
        <location evidence="1">Nucleus</location>
    </subcellularLocation>
</comment>
<comment type="similarity">
    <text evidence="1">Belongs to the KAE1 / TsaD family.</text>
</comment>
<gene>
    <name evidence="1" type="primary">KAE1</name>
    <name type="ordered locus">YALI0C05280g</name>
</gene>
<keyword id="KW-0010">Activator</keyword>
<keyword id="KW-0012">Acyltransferase</keyword>
<keyword id="KW-0963">Cytoplasm</keyword>
<keyword id="KW-0479">Metal-binding</keyword>
<keyword id="KW-0539">Nucleus</keyword>
<keyword id="KW-1185">Reference proteome</keyword>
<keyword id="KW-0804">Transcription</keyword>
<keyword id="KW-0805">Transcription regulation</keyword>
<keyword id="KW-0808">Transferase</keyword>
<keyword id="KW-0819">tRNA processing</keyword>
<evidence type="ECO:0000255" key="1">
    <source>
        <dbReference type="HAMAP-Rule" id="MF_03180"/>
    </source>
</evidence>
<accession>Q6CCZ5</accession>